<protein>
    <recommendedName>
        <fullName evidence="1">Large ribosomal subunit protein bL12</fullName>
    </recommendedName>
    <alternativeName>
        <fullName evidence="2">50S ribosomal protein L7/L12</fullName>
    </alternativeName>
</protein>
<evidence type="ECO:0000255" key="1">
    <source>
        <dbReference type="HAMAP-Rule" id="MF_00368"/>
    </source>
</evidence>
<evidence type="ECO:0000305" key="2"/>
<gene>
    <name evidence="1" type="primary">rplL</name>
    <name type="ordered locus">Gbem_0925</name>
</gene>
<name>RL7_CITBB</name>
<proteinExistence type="inferred from homology"/>
<dbReference type="EMBL" id="CP001124">
    <property type="protein sequence ID" value="ACH37946.1"/>
    <property type="molecule type" value="Genomic_DNA"/>
</dbReference>
<dbReference type="RefSeq" id="WP_012529358.1">
    <property type="nucleotide sequence ID" value="NC_011146.1"/>
</dbReference>
<dbReference type="SMR" id="B5EFP2"/>
<dbReference type="STRING" id="404380.Gbem_0925"/>
<dbReference type="KEGG" id="gbm:Gbem_0925"/>
<dbReference type="eggNOG" id="COG0222">
    <property type="taxonomic scope" value="Bacteria"/>
</dbReference>
<dbReference type="HOGENOM" id="CLU_086499_3_0_7"/>
<dbReference type="OrthoDB" id="9811748at2"/>
<dbReference type="Proteomes" id="UP000008825">
    <property type="component" value="Chromosome"/>
</dbReference>
<dbReference type="GO" id="GO:0022625">
    <property type="term" value="C:cytosolic large ribosomal subunit"/>
    <property type="evidence" value="ECO:0007669"/>
    <property type="project" value="TreeGrafter"/>
</dbReference>
<dbReference type="GO" id="GO:0003729">
    <property type="term" value="F:mRNA binding"/>
    <property type="evidence" value="ECO:0007669"/>
    <property type="project" value="TreeGrafter"/>
</dbReference>
<dbReference type="GO" id="GO:0003735">
    <property type="term" value="F:structural constituent of ribosome"/>
    <property type="evidence" value="ECO:0007669"/>
    <property type="project" value="InterPro"/>
</dbReference>
<dbReference type="GO" id="GO:0006412">
    <property type="term" value="P:translation"/>
    <property type="evidence" value="ECO:0007669"/>
    <property type="project" value="UniProtKB-UniRule"/>
</dbReference>
<dbReference type="CDD" id="cd00387">
    <property type="entry name" value="Ribosomal_L7_L12"/>
    <property type="match status" value="1"/>
</dbReference>
<dbReference type="FunFam" id="1.20.5.710:FF:000008">
    <property type="entry name" value="50S ribosomal protein L7/L12"/>
    <property type="match status" value="1"/>
</dbReference>
<dbReference type="FunFam" id="3.30.1390.10:FF:000001">
    <property type="entry name" value="50S ribosomal protein L7/L12"/>
    <property type="match status" value="1"/>
</dbReference>
<dbReference type="Gene3D" id="3.30.1390.10">
    <property type="match status" value="1"/>
</dbReference>
<dbReference type="Gene3D" id="1.20.5.710">
    <property type="entry name" value="Single helix bin"/>
    <property type="match status" value="1"/>
</dbReference>
<dbReference type="HAMAP" id="MF_00368">
    <property type="entry name" value="Ribosomal_bL12"/>
    <property type="match status" value="1"/>
</dbReference>
<dbReference type="InterPro" id="IPR000206">
    <property type="entry name" value="Ribosomal_bL12"/>
</dbReference>
<dbReference type="InterPro" id="IPR013823">
    <property type="entry name" value="Ribosomal_bL12_C"/>
</dbReference>
<dbReference type="InterPro" id="IPR014719">
    <property type="entry name" value="Ribosomal_bL12_C/ClpS-like"/>
</dbReference>
<dbReference type="InterPro" id="IPR008932">
    <property type="entry name" value="Ribosomal_bL12_oligo"/>
</dbReference>
<dbReference type="InterPro" id="IPR036235">
    <property type="entry name" value="Ribosomal_bL12_oligo_N_sf"/>
</dbReference>
<dbReference type="NCBIfam" id="TIGR00855">
    <property type="entry name" value="L12"/>
    <property type="match status" value="1"/>
</dbReference>
<dbReference type="PANTHER" id="PTHR45987">
    <property type="entry name" value="39S RIBOSOMAL PROTEIN L12"/>
    <property type="match status" value="1"/>
</dbReference>
<dbReference type="PANTHER" id="PTHR45987:SF4">
    <property type="entry name" value="LARGE RIBOSOMAL SUBUNIT PROTEIN BL12M"/>
    <property type="match status" value="1"/>
</dbReference>
<dbReference type="Pfam" id="PF00542">
    <property type="entry name" value="Ribosomal_L12"/>
    <property type="match status" value="1"/>
</dbReference>
<dbReference type="Pfam" id="PF16320">
    <property type="entry name" value="Ribosomal_L12_N"/>
    <property type="match status" value="1"/>
</dbReference>
<dbReference type="SUPFAM" id="SSF54736">
    <property type="entry name" value="ClpS-like"/>
    <property type="match status" value="1"/>
</dbReference>
<dbReference type="SUPFAM" id="SSF48300">
    <property type="entry name" value="Ribosomal protein L7/12, oligomerisation (N-terminal) domain"/>
    <property type="match status" value="1"/>
</dbReference>
<keyword id="KW-1185">Reference proteome</keyword>
<keyword id="KW-0687">Ribonucleoprotein</keyword>
<keyword id="KW-0689">Ribosomal protein</keyword>
<organism>
    <name type="scientific">Citrifermentans bemidjiense (strain ATCC BAA-1014 / DSM 16622 / JCM 12645 / Bem)</name>
    <name type="common">Geobacter bemidjiensis</name>
    <dbReference type="NCBI Taxonomy" id="404380"/>
    <lineage>
        <taxon>Bacteria</taxon>
        <taxon>Pseudomonadati</taxon>
        <taxon>Thermodesulfobacteriota</taxon>
        <taxon>Desulfuromonadia</taxon>
        <taxon>Geobacterales</taxon>
        <taxon>Geobacteraceae</taxon>
        <taxon>Citrifermentans</taxon>
    </lineage>
</organism>
<reference key="1">
    <citation type="submission" date="2008-07" db="EMBL/GenBank/DDBJ databases">
        <title>Complete sequence of Geobacter bemidjiensis BEM.</title>
        <authorList>
            <consortium name="US DOE Joint Genome Institute"/>
            <person name="Lucas S."/>
            <person name="Copeland A."/>
            <person name="Lapidus A."/>
            <person name="Glavina del Rio T."/>
            <person name="Dalin E."/>
            <person name="Tice H."/>
            <person name="Bruce D."/>
            <person name="Goodwin L."/>
            <person name="Pitluck S."/>
            <person name="Kiss H."/>
            <person name="Brettin T."/>
            <person name="Detter J.C."/>
            <person name="Han C."/>
            <person name="Kuske C.R."/>
            <person name="Schmutz J."/>
            <person name="Larimer F."/>
            <person name="Land M."/>
            <person name="Hauser L."/>
            <person name="Kyrpides N."/>
            <person name="Lykidis A."/>
            <person name="Lovley D."/>
            <person name="Richardson P."/>
        </authorList>
    </citation>
    <scope>NUCLEOTIDE SEQUENCE [LARGE SCALE GENOMIC DNA]</scope>
    <source>
        <strain>ATCC BAA-1014 / DSM 16622 / JCM 12645 / Bem</strain>
    </source>
</reference>
<accession>B5EFP2</accession>
<comment type="function">
    <text evidence="1">Forms part of the ribosomal stalk which helps the ribosome interact with GTP-bound translation factors. Is thus essential for accurate translation.</text>
</comment>
<comment type="subunit">
    <text evidence="1">Homodimer. Part of the ribosomal stalk of the 50S ribosomal subunit. Forms a multimeric L10(L12)X complex, where L10 forms an elongated spine to which 2 to 4 L12 dimers bind in a sequential fashion. Binds GTP-bound translation factors.</text>
</comment>
<comment type="similarity">
    <text evidence="1">Belongs to the bacterial ribosomal protein bL12 family.</text>
</comment>
<sequence>MAITKEEVISFIENMSVLELANLVKELEEKFGVSAAAPVAVAAAGPAAGPAESAEEKTEFDVILKAAGANKIAVIKVVRGLTSLGLKEAKDLVDGAPQPVKTGISKEEAADAQKQLVEAGAEVEVK</sequence>
<feature type="chain" id="PRO_1000205559" description="Large ribosomal subunit protein bL12">
    <location>
        <begin position="1"/>
        <end position="126"/>
    </location>
</feature>